<reference key="1">
    <citation type="journal article" date="2001" name="Lancet">
        <title>Whole genome sequencing of meticillin-resistant Staphylococcus aureus.</title>
        <authorList>
            <person name="Kuroda M."/>
            <person name="Ohta T."/>
            <person name="Uchiyama I."/>
            <person name="Baba T."/>
            <person name="Yuzawa H."/>
            <person name="Kobayashi I."/>
            <person name="Cui L."/>
            <person name="Oguchi A."/>
            <person name="Aoki K."/>
            <person name="Nagai Y."/>
            <person name="Lian J.-Q."/>
            <person name="Ito T."/>
            <person name="Kanamori M."/>
            <person name="Matsumaru H."/>
            <person name="Maruyama A."/>
            <person name="Murakami H."/>
            <person name="Hosoyama A."/>
            <person name="Mizutani-Ui Y."/>
            <person name="Takahashi N.K."/>
            <person name="Sawano T."/>
            <person name="Inoue R."/>
            <person name="Kaito C."/>
            <person name="Sekimizu K."/>
            <person name="Hirakawa H."/>
            <person name="Kuhara S."/>
            <person name="Goto S."/>
            <person name="Yabuzaki J."/>
            <person name="Kanehisa M."/>
            <person name="Yamashita A."/>
            <person name="Oshima K."/>
            <person name="Furuya K."/>
            <person name="Yoshino C."/>
            <person name="Shiba T."/>
            <person name="Hattori M."/>
            <person name="Ogasawara N."/>
            <person name="Hayashi H."/>
            <person name="Hiramatsu K."/>
        </authorList>
    </citation>
    <scope>NUCLEOTIDE SEQUENCE [LARGE SCALE GENOMIC DNA]</scope>
    <source>
        <strain>N315</strain>
    </source>
</reference>
<reference key="2">
    <citation type="submission" date="2007-10" db="UniProtKB">
        <title>Shotgun proteomic analysis of total and membrane protein extracts of S. aureus strain N315.</title>
        <authorList>
            <person name="Vaezzadeh A.R."/>
            <person name="Deshusses J."/>
            <person name="Lescuyer P."/>
            <person name="Hochstrasser D.F."/>
        </authorList>
    </citation>
    <scope>IDENTIFICATION BY MASS SPECTROMETRY [LARGE SCALE ANALYSIS]</scope>
    <source>
        <strain>N315</strain>
    </source>
</reference>
<sequence length="108" mass="12205">MNLNIETTTQDKFYEVKVGGELDVYTVPELEEVLTPMRQDGTRDIYVNLENVSYMDSTGLGLFVGTLKALNQNDKELYILGVSDRIGRLFEITGLKDLMHVNEGTEVE</sequence>
<gene>
    <name type="primary">rsbV</name>
    <name type="ordered locus">SA1871</name>
</gene>
<dbReference type="EMBL" id="BA000018">
    <property type="protein sequence ID" value="BAB43153.1"/>
    <property type="molecule type" value="Genomic_DNA"/>
</dbReference>
<dbReference type="PIR" id="H89998">
    <property type="entry name" value="H89998"/>
</dbReference>
<dbReference type="RefSeq" id="WP_001052491.1">
    <property type="nucleotide sequence ID" value="NC_002745.2"/>
</dbReference>
<dbReference type="SMR" id="P66838"/>
<dbReference type="EnsemblBacteria" id="BAB43153">
    <property type="protein sequence ID" value="BAB43153"/>
    <property type="gene ID" value="BAB43153"/>
</dbReference>
<dbReference type="KEGG" id="sau:SA1871"/>
<dbReference type="HOGENOM" id="CLU_115403_9_3_9"/>
<dbReference type="GO" id="GO:0043856">
    <property type="term" value="F:anti-sigma factor antagonist activity"/>
    <property type="evidence" value="ECO:0007669"/>
    <property type="project" value="InterPro"/>
</dbReference>
<dbReference type="CDD" id="cd07043">
    <property type="entry name" value="STAS_anti-anti-sigma_factors"/>
    <property type="match status" value="1"/>
</dbReference>
<dbReference type="FunFam" id="3.30.750.24:FF:000001">
    <property type="entry name" value="Anti-sigma factor antagonist"/>
    <property type="match status" value="1"/>
</dbReference>
<dbReference type="Gene3D" id="3.30.750.24">
    <property type="entry name" value="STAS domain"/>
    <property type="match status" value="1"/>
</dbReference>
<dbReference type="InterPro" id="IPR003658">
    <property type="entry name" value="Anti-sigma_ant"/>
</dbReference>
<dbReference type="InterPro" id="IPR002645">
    <property type="entry name" value="STAS_dom"/>
</dbReference>
<dbReference type="InterPro" id="IPR036513">
    <property type="entry name" value="STAS_dom_sf"/>
</dbReference>
<dbReference type="NCBIfam" id="TIGR00377">
    <property type="entry name" value="ant_ant_sig"/>
    <property type="match status" value="1"/>
</dbReference>
<dbReference type="PANTHER" id="PTHR33495">
    <property type="entry name" value="ANTI-SIGMA FACTOR ANTAGONIST TM_1081-RELATED-RELATED"/>
    <property type="match status" value="1"/>
</dbReference>
<dbReference type="PANTHER" id="PTHR33495:SF9">
    <property type="entry name" value="ANTI-SIGMA-B FACTOR ANTAGONIST"/>
    <property type="match status" value="1"/>
</dbReference>
<dbReference type="Pfam" id="PF01740">
    <property type="entry name" value="STAS"/>
    <property type="match status" value="1"/>
</dbReference>
<dbReference type="SUPFAM" id="SSF52091">
    <property type="entry name" value="SpoIIaa-like"/>
    <property type="match status" value="1"/>
</dbReference>
<dbReference type="PROSITE" id="PS50801">
    <property type="entry name" value="STAS"/>
    <property type="match status" value="1"/>
</dbReference>
<accession>P66838</accession>
<accession>Q925Z9</accession>
<comment type="function">
    <text evidence="1">Positive regulator of sigma-B activity. Non-phosphorylated RsbV binds to RsbW, preventing its association with sigma-B. When phosphorylated, releases RsbW, which is then free to complex with and inactivate sigma-B (By similarity).</text>
</comment>
<comment type="PTM">
    <text evidence="1">Phosphorylated by RsbW on a serine residue.</text>
</comment>
<comment type="similarity">
    <text evidence="3">Belongs to the anti-sigma-factor antagonist family.</text>
</comment>
<keyword id="KW-0597">Phosphoprotein</keyword>
<feature type="chain" id="PRO_0000194190" description="Anti-sigma-B factor antagonist">
    <location>
        <begin position="1"/>
        <end position="108"/>
    </location>
</feature>
<feature type="domain" description="STAS" evidence="2">
    <location>
        <begin position="3"/>
        <end position="108"/>
    </location>
</feature>
<feature type="modified residue" description="Phosphoserine" evidence="1">
    <location>
        <position position="57"/>
    </location>
</feature>
<organism>
    <name type="scientific">Staphylococcus aureus (strain N315)</name>
    <dbReference type="NCBI Taxonomy" id="158879"/>
    <lineage>
        <taxon>Bacteria</taxon>
        <taxon>Bacillati</taxon>
        <taxon>Bacillota</taxon>
        <taxon>Bacilli</taxon>
        <taxon>Bacillales</taxon>
        <taxon>Staphylococcaceae</taxon>
        <taxon>Staphylococcus</taxon>
    </lineage>
</organism>
<evidence type="ECO:0000250" key="1"/>
<evidence type="ECO:0000255" key="2">
    <source>
        <dbReference type="PROSITE-ProRule" id="PRU00198"/>
    </source>
</evidence>
<evidence type="ECO:0000305" key="3"/>
<proteinExistence type="evidence at protein level"/>
<protein>
    <recommendedName>
        <fullName>Anti-sigma-B factor antagonist</fullName>
    </recommendedName>
    <alternativeName>
        <fullName>Anti-anti-sigma-B factor</fullName>
    </alternativeName>
</protein>
<name>RSBV_STAAN</name>